<evidence type="ECO:0000250" key="1"/>
<evidence type="ECO:0000256" key="2">
    <source>
        <dbReference type="SAM" id="MobiDB-lite"/>
    </source>
</evidence>
<evidence type="ECO:0000305" key="3"/>
<organism>
    <name type="scientific">Escherichia coli O157:H7</name>
    <dbReference type="NCBI Taxonomy" id="83334"/>
    <lineage>
        <taxon>Bacteria</taxon>
        <taxon>Pseudomonadati</taxon>
        <taxon>Pseudomonadota</taxon>
        <taxon>Gammaproteobacteria</taxon>
        <taxon>Enterobacterales</taxon>
        <taxon>Enterobacteriaceae</taxon>
        <taxon>Escherichia</taxon>
    </lineage>
</organism>
<sequence length="323" mass="35372">MKRAPVIPKHTLNTQPVEDTSLSTPAAPMVDSLIARVGVMARGNAITLPVCGRDVKFTLEVLRGDSVEKTSRVWSGNERDQELLTEDALDDLIPSFLLTGQQTPAFGRRVSGVIEIADGSRRRKAAALTESDYRVLVGELDDEQMAALSRLGNDYRPTSAYERGQRYASRLQNEFAGNISALADAENISRKIITRCINTAKLPKSVVALFSHPGELSARSGDALQKAFTDKEELLKQQASNLHEQKKAGVIFEAEEVITLLTSVLKTSSASRTSLSSRHQFAPGATVLYKGDKMVLNLDRSRVPTECIEKIEAILKELEKPAP</sequence>
<protein>
    <recommendedName>
        <fullName>Protein SopB</fullName>
    </recommendedName>
    <alternativeName>
        <fullName>Plasmid partition protein B</fullName>
    </alternativeName>
</protein>
<accession>P62559</accession>
<accession>P08867</accession>
<geneLocation type="plasmid">
    <name>pO157</name>
</geneLocation>
<keyword id="KW-0238">DNA-binding</keyword>
<keyword id="KW-0614">Plasmid</keyword>
<keyword id="KW-0616">Plasmid partition</keyword>
<keyword id="KW-1185">Reference proteome</keyword>
<comment type="function">
    <text evidence="1">Control of plasmid partitioning; required to recognize the cis-acting. Binds specifically with the DNA segment containing the sopC region. SopB is trans-acting (By similarity).</text>
</comment>
<comment type="miscellaneous">
    <text evidence="1">Overproduction of SopB protein causes IncG incompatibility.</text>
</comment>
<comment type="similarity">
    <text evidence="3">Belongs to the ParB family.</text>
</comment>
<dbReference type="EMBL" id="AF074613">
    <property type="protein sequence ID" value="AAC70137.1"/>
    <property type="molecule type" value="Genomic_DNA"/>
</dbReference>
<dbReference type="EMBL" id="AB011549">
    <property type="protein sequence ID" value="BAA31791.1"/>
    <property type="molecule type" value="Genomic_DNA"/>
</dbReference>
<dbReference type="RefSeq" id="NP_052641.1">
    <property type="nucleotide sequence ID" value="NC_002128.1"/>
</dbReference>
<dbReference type="RefSeq" id="WP_000817031.1">
    <property type="nucleotide sequence ID" value="NZ_VOAI01000050.1"/>
</dbReference>
<dbReference type="SMR" id="P62559"/>
<dbReference type="GeneID" id="1789685"/>
<dbReference type="KEGG" id="ece:Z_L7069"/>
<dbReference type="KEGG" id="ecs:pO157p34"/>
<dbReference type="PATRIC" id="fig|386585.9.peg.39"/>
<dbReference type="eggNOG" id="COG1475">
    <property type="taxonomic scope" value="Bacteria"/>
</dbReference>
<dbReference type="HOGENOM" id="CLU_066637_0_0_6"/>
<dbReference type="OMA" id="NTKHAKF"/>
<dbReference type="Proteomes" id="UP000000558">
    <property type="component" value="Plasmid pO157"/>
</dbReference>
<dbReference type="Proteomes" id="UP000002519">
    <property type="component" value="Plasmid pO157"/>
</dbReference>
<dbReference type="GO" id="GO:0003677">
    <property type="term" value="F:DNA binding"/>
    <property type="evidence" value="ECO:0007669"/>
    <property type="project" value="UniProtKB-KW"/>
</dbReference>
<dbReference type="GO" id="GO:0030541">
    <property type="term" value="P:plasmid partitioning"/>
    <property type="evidence" value="ECO:0007669"/>
    <property type="project" value="UniProtKB-KW"/>
</dbReference>
<dbReference type="CDD" id="cd16394">
    <property type="entry name" value="sopB_N"/>
    <property type="match status" value="1"/>
</dbReference>
<dbReference type="Gene3D" id="1.10.10.2830">
    <property type="match status" value="1"/>
</dbReference>
<dbReference type="Gene3D" id="6.10.140.1550">
    <property type="match status" value="1"/>
</dbReference>
<dbReference type="InterPro" id="IPR004437">
    <property type="entry name" value="ParB/RepB/Spo0J"/>
</dbReference>
<dbReference type="InterPro" id="IPR003115">
    <property type="entry name" value="ParB/Sulfiredoxin_dom"/>
</dbReference>
<dbReference type="InterPro" id="IPR036086">
    <property type="entry name" value="ParB/Sulfiredoxin_sf"/>
</dbReference>
<dbReference type="InterPro" id="IPR040873">
    <property type="entry name" value="SoPB_HTH"/>
</dbReference>
<dbReference type="NCBIfam" id="TIGR00180">
    <property type="entry name" value="parB_part"/>
    <property type="match status" value="1"/>
</dbReference>
<dbReference type="NCBIfam" id="NF010252">
    <property type="entry name" value="PRK13698.1"/>
    <property type="match status" value="1"/>
</dbReference>
<dbReference type="PANTHER" id="PTHR38973:SF2">
    <property type="entry name" value="PARB_REPB_SPO0J FAMILY PLASMID PARTITION PROTEIN"/>
    <property type="match status" value="1"/>
</dbReference>
<dbReference type="PANTHER" id="PTHR38973">
    <property type="entry name" value="PLASMID PARTITIONING CONTROL PROTEIN-RELATED"/>
    <property type="match status" value="1"/>
</dbReference>
<dbReference type="Pfam" id="PF02195">
    <property type="entry name" value="ParBc"/>
    <property type="match status" value="1"/>
</dbReference>
<dbReference type="Pfam" id="PF18090">
    <property type="entry name" value="SoPB_HTH"/>
    <property type="match status" value="1"/>
</dbReference>
<dbReference type="SMART" id="SM00470">
    <property type="entry name" value="ParB"/>
    <property type="match status" value="1"/>
</dbReference>
<dbReference type="SUPFAM" id="SSF110849">
    <property type="entry name" value="ParB/Sulfiredoxin"/>
    <property type="match status" value="1"/>
</dbReference>
<reference key="1">
    <citation type="journal article" date="1998" name="Nucleic Acids Res.">
        <title>The complete DNA sequence and analysis of the large virulence plasmid of Escherichia coli O157:H7.</title>
        <authorList>
            <person name="Burland V."/>
            <person name="Shao Y."/>
            <person name="Perna N.T."/>
            <person name="Plunkett G. III"/>
            <person name="Sofia H.J."/>
            <person name="Blattner F.R."/>
        </authorList>
    </citation>
    <scope>NUCLEOTIDE SEQUENCE [LARGE SCALE GENOMIC DNA]</scope>
    <source>
        <strain>O157:H7 / EDL933 / ATCC 700927 / EHEC</strain>
    </source>
</reference>
<reference key="2">
    <citation type="journal article" date="1998" name="DNA Res.">
        <title>Complete nucleotide sequences of 93-kb and 3.3-kb plasmids of an enterohemorrhagic Escherichia coli O157:H7 derived from Sakai outbreak.</title>
        <authorList>
            <person name="Makino K."/>
            <person name="Ishii K."/>
            <person name="Yasunaga T."/>
            <person name="Hattori M."/>
            <person name="Yokoyama K."/>
            <person name="Yatsudo H.C."/>
            <person name="Kubota Y."/>
            <person name="Yamaichi Y."/>
            <person name="Iida T."/>
            <person name="Yamamoto K."/>
            <person name="Honda T."/>
            <person name="Han C.G."/>
            <person name="Ohtsubo A."/>
            <person name="Kasamatsu M."/>
            <person name="Hayashi T."/>
            <person name="Kuhara S."/>
            <person name="Shinagawa H."/>
        </authorList>
    </citation>
    <scope>NUCLEOTIDE SEQUENCE [LARGE SCALE GENOMIC DNA]</scope>
    <source>
        <strain>O157:H7 / Sakai / RIMD 0509952 / EHEC</strain>
    </source>
</reference>
<name>SOPB_ECO57</name>
<proteinExistence type="inferred from homology"/>
<feature type="chain" id="PRO_0000068409" description="Protein SopB">
    <location>
        <begin position="1"/>
        <end position="323"/>
    </location>
</feature>
<feature type="DNA-binding region" description="H-T-H motif" evidence="1">
    <location>
        <begin position="180"/>
        <end position="199"/>
    </location>
</feature>
<feature type="region of interest" description="Disordered" evidence="2">
    <location>
        <begin position="1"/>
        <end position="20"/>
    </location>
</feature>
<feature type="compositionally biased region" description="Polar residues" evidence="2">
    <location>
        <begin position="11"/>
        <end position="20"/>
    </location>
</feature>
<gene>
    <name type="primary">sopB</name>
    <name type="synonym">B</name>
    <name type="ordered locus">L7069</name>
    <name type="ordered locus">ECO57PM34</name>
</gene>